<accession>O28254</accession>
<dbReference type="EMBL" id="AE000782">
    <property type="protein sequence ID" value="AAB89239.1"/>
    <property type="molecule type" value="Genomic_DNA"/>
</dbReference>
<dbReference type="PIR" id="H69502">
    <property type="entry name" value="H69502"/>
</dbReference>
<dbReference type="STRING" id="224325.AF_2025"/>
<dbReference type="PaxDb" id="224325-AF_2025"/>
<dbReference type="EnsemblBacteria" id="AAB89239">
    <property type="protein sequence ID" value="AAB89239"/>
    <property type="gene ID" value="AF_2025"/>
</dbReference>
<dbReference type="KEGG" id="afu:AF_2025"/>
<dbReference type="HOGENOM" id="CLU_1507300_0_0_2"/>
<dbReference type="Proteomes" id="UP000002199">
    <property type="component" value="Chromosome"/>
</dbReference>
<dbReference type="GO" id="GO:0005886">
    <property type="term" value="C:plasma membrane"/>
    <property type="evidence" value="ECO:0007669"/>
    <property type="project" value="UniProtKB-SubCell"/>
</dbReference>
<gene>
    <name type="ordered locus">AF_2025</name>
</gene>
<organism>
    <name type="scientific">Archaeoglobus fulgidus (strain ATCC 49558 / DSM 4304 / JCM 9628 / NBRC 100126 / VC-16)</name>
    <dbReference type="NCBI Taxonomy" id="224325"/>
    <lineage>
        <taxon>Archaea</taxon>
        <taxon>Methanobacteriati</taxon>
        <taxon>Methanobacteriota</taxon>
        <taxon>Archaeoglobi</taxon>
        <taxon>Archaeoglobales</taxon>
        <taxon>Archaeoglobaceae</taxon>
        <taxon>Archaeoglobus</taxon>
    </lineage>
</organism>
<protein>
    <recommendedName>
        <fullName>Uncharacterized protein AF_2025</fullName>
    </recommendedName>
</protein>
<sequence>MVDLDEFEVVLEELVKEVKRRDTIAAVLISTSFVLFGFLALVLLNVIRLEEFMRGIVAIVSLIAIWVLMTAGVYILLSMPLPELPTRIVADSKGVMELMKRNYGGKIYITRQSYRNLPPKVGARMNLEIVDVSDEEVAKYLNHGVELAESIAAAKKLKAKVVSDRKMKVDGVEIIKAEDLF</sequence>
<comment type="subcellular location">
    <subcellularLocation>
        <location evidence="2">Cell membrane</location>
        <topology evidence="2">Multi-pass membrane protein</topology>
    </subcellularLocation>
</comment>
<feature type="chain" id="PRO_0000128085" description="Uncharacterized protein AF_2025">
    <location>
        <begin position="1"/>
        <end position="181"/>
    </location>
</feature>
<feature type="transmembrane region" description="Helical" evidence="1">
    <location>
        <begin position="24"/>
        <end position="46"/>
    </location>
</feature>
<feature type="transmembrane region" description="Helical" evidence="1">
    <location>
        <begin position="55"/>
        <end position="77"/>
    </location>
</feature>
<evidence type="ECO:0000255" key="1"/>
<evidence type="ECO:0000305" key="2"/>
<name>Y2025_ARCFU</name>
<reference key="1">
    <citation type="journal article" date="1997" name="Nature">
        <title>The complete genome sequence of the hyperthermophilic, sulphate-reducing archaeon Archaeoglobus fulgidus.</title>
        <authorList>
            <person name="Klenk H.-P."/>
            <person name="Clayton R.A."/>
            <person name="Tomb J.-F."/>
            <person name="White O."/>
            <person name="Nelson K.E."/>
            <person name="Ketchum K.A."/>
            <person name="Dodson R.J."/>
            <person name="Gwinn M.L."/>
            <person name="Hickey E.K."/>
            <person name="Peterson J.D."/>
            <person name="Richardson D.L."/>
            <person name="Kerlavage A.R."/>
            <person name="Graham D.E."/>
            <person name="Kyrpides N.C."/>
            <person name="Fleischmann R.D."/>
            <person name="Quackenbush J."/>
            <person name="Lee N.H."/>
            <person name="Sutton G.G."/>
            <person name="Gill S.R."/>
            <person name="Kirkness E.F."/>
            <person name="Dougherty B.A."/>
            <person name="McKenney K."/>
            <person name="Adams M.D."/>
            <person name="Loftus B.J."/>
            <person name="Peterson S.N."/>
            <person name="Reich C.I."/>
            <person name="McNeil L.K."/>
            <person name="Badger J.H."/>
            <person name="Glodek A."/>
            <person name="Zhou L."/>
            <person name="Overbeek R."/>
            <person name="Gocayne J.D."/>
            <person name="Weidman J.F."/>
            <person name="McDonald L.A."/>
            <person name="Utterback T.R."/>
            <person name="Cotton M.D."/>
            <person name="Spriggs T."/>
            <person name="Artiach P."/>
            <person name="Kaine B.P."/>
            <person name="Sykes S.M."/>
            <person name="Sadow P.W."/>
            <person name="D'Andrea K.P."/>
            <person name="Bowman C."/>
            <person name="Fujii C."/>
            <person name="Garland S.A."/>
            <person name="Mason T.M."/>
            <person name="Olsen G.J."/>
            <person name="Fraser C.M."/>
            <person name="Smith H.O."/>
            <person name="Woese C.R."/>
            <person name="Venter J.C."/>
        </authorList>
    </citation>
    <scope>NUCLEOTIDE SEQUENCE [LARGE SCALE GENOMIC DNA]</scope>
    <source>
        <strain>ATCC 49558 / DSM 4304 / JCM 9628 / NBRC 100126 / VC-16</strain>
    </source>
</reference>
<proteinExistence type="predicted"/>
<keyword id="KW-1003">Cell membrane</keyword>
<keyword id="KW-0472">Membrane</keyword>
<keyword id="KW-1185">Reference proteome</keyword>
<keyword id="KW-0812">Transmembrane</keyword>
<keyword id="KW-1133">Transmembrane helix</keyword>